<comment type="function">
    <text>May have a role in the cell cycle.</text>
</comment>
<comment type="subunit">
    <text evidence="1 2 4">Homodimer (By similarity). Interacts with POLDIP3. Component of the methylosome, a 20S complex containing at least CLNS1A/pICln, PRMT5/SKB1, WDR77/MEP50, PRMT1 and ERH (PubMed:25284789). Interacts with CHTOP (PubMed:25284789).</text>
</comment>
<comment type="interaction">
    <interactant intactId="EBI-711389">
        <id>P84090</id>
    </interactant>
    <interactant intactId="EBI-721179">
        <id>P27449</id>
        <label>ATP6V0C</label>
    </interactant>
    <organismsDiffer>false</organismsDiffer>
    <experiments>3</experiments>
</comment>
<comment type="interaction">
    <interactant intactId="EBI-711389">
        <id>P84090</id>
    </interactant>
    <interactant intactId="EBI-1003700">
        <id>Q9H3R5</id>
        <label>CENPH</label>
    </interactant>
    <organismsDiffer>false</organismsDiffer>
    <experiments>3</experiments>
</comment>
<comment type="interaction">
    <interactant intactId="EBI-711389">
        <id>P84090</id>
    </interactant>
    <interactant intactId="EBI-347794">
        <id>Q9Y3Y2</id>
        <label>CHTOP</label>
    </interactant>
    <organismsDiffer>false</organismsDiffer>
    <experiments>6</experiments>
</comment>
<comment type="interaction">
    <interactant intactId="EBI-711389">
        <id>P84090</id>
    </interactant>
    <interactant intactId="EBI-11984237">
        <id>Q9Y3Y2-3</id>
        <label>CHTOP</label>
    </interactant>
    <organismsDiffer>false</organismsDiffer>
    <experiments>5</experiments>
</comment>
<comment type="interaction">
    <interactant intactId="EBI-711389">
        <id>P84090</id>
    </interactant>
    <interactant intactId="EBI-3867333">
        <id>A8MQ03</id>
        <label>CYSRT1</label>
    </interactant>
    <organismsDiffer>false</organismsDiffer>
    <experiments>3</experiments>
</comment>
<comment type="interaction">
    <interactant intactId="EBI-711389">
        <id>P84090</id>
    </interactant>
    <interactant intactId="EBI-357793">
        <id>P60900</id>
        <label>PSMA6</label>
    </interactant>
    <organismsDiffer>false</organismsDiffer>
    <experiments>3</experiments>
</comment>
<comment type="interaction">
    <interactant intactId="EBI-711389">
        <id>P84090</id>
    </interactant>
    <interactant intactId="EBI-372789">
        <id>P62318</id>
        <label>SNRPD3</label>
    </interactant>
    <organismsDiffer>false</organismsDiffer>
    <experiments>3</experiments>
</comment>
<comment type="interaction">
    <interactant intactId="EBI-711389">
        <id>P84090</id>
    </interactant>
    <interactant intactId="EBI-745958">
        <id>Q5VWN6</id>
        <label>TASOR2</label>
    </interactant>
    <organismsDiffer>false</organismsDiffer>
    <experiments>8</experiments>
</comment>
<comment type="interaction">
    <interactant intactId="EBI-711389">
        <id>P84090</id>
    </interactant>
    <interactant intactId="EBI-10172380">
        <id>Q5VWN6-2</id>
        <label>TASOR2</label>
    </interactant>
    <organismsDiffer>false</organismsDiffer>
    <experiments>3</experiments>
</comment>
<comment type="interaction">
    <interactant intactId="EBI-711389">
        <id>P84090</id>
    </interactant>
    <interactant intactId="EBI-742943">
        <id>Q96BW1</id>
        <label>UPRT</label>
    </interactant>
    <organismsDiffer>false</organismsDiffer>
    <experiments>3</experiments>
</comment>
<comment type="subcellular location">
    <subcellularLocation>
        <location evidence="3">Nucleus</location>
    </subcellularLocation>
</comment>
<comment type="tissue specificity">
    <text evidence="5">Expressed in all tissues examined.</text>
</comment>
<comment type="similarity">
    <text evidence="7">Belongs to the E(R) family.</text>
</comment>
<keyword id="KW-0002">3D-structure</keyword>
<keyword id="KW-0007">Acetylation</keyword>
<keyword id="KW-0131">Cell cycle</keyword>
<keyword id="KW-0903">Direct protein sequencing</keyword>
<keyword id="KW-1017">Isopeptide bond</keyword>
<keyword id="KW-0539">Nucleus</keyword>
<keyword id="KW-0597">Phosphoprotein</keyword>
<keyword id="KW-1267">Proteomics identification</keyword>
<keyword id="KW-1185">Reference proteome</keyword>
<keyword id="KW-0832">Ubl conjugation</keyword>
<reference key="1">
    <citation type="journal article" date="1996" name="Genomics">
        <title>Cloning and mapping of a novel human cDNA homologous to DROER, the enhancer of the Drosophila melanogaster rudimentary gene.</title>
        <authorList>
            <person name="Isomura M."/>
            <person name="Okui K."/>
            <person name="Fujiwara T."/>
            <person name="Shin S."/>
            <person name="Nakamura Y."/>
        </authorList>
    </citation>
    <scope>NUCLEOTIDE SEQUENCE [MRNA]</scope>
    <scope>TISSUE SPECIFICITY</scope>
</reference>
<reference key="2">
    <citation type="journal article" date="1997" name="Gene">
        <title>The putative cell cycle gene, enhancer of rudimentary, encodes a highly conserved protein found in plants and animals.</title>
        <authorList>
            <person name="Gelsthorpe M."/>
            <person name="Pulumati M."/>
            <person name="McCallum C."/>
            <person name="Dang-Vu K."/>
            <person name="Tsubota S.I."/>
        </authorList>
    </citation>
    <scope>NUCLEOTIDE SEQUENCE [MRNA]</scope>
</reference>
<reference key="3">
    <citation type="submission" date="2003-05" db="EMBL/GenBank/DDBJ databases">
        <title>Cloning of human full-length CDSs in BD Creator(TM) system donor vector.</title>
        <authorList>
            <person name="Kalnine N."/>
            <person name="Chen X."/>
            <person name="Rolfs A."/>
            <person name="Halleck A."/>
            <person name="Hines L."/>
            <person name="Eisenstein S."/>
            <person name="Koundinya M."/>
            <person name="Raphael J."/>
            <person name="Moreira D."/>
            <person name="Kelley T."/>
            <person name="LaBaer J."/>
            <person name="Lin Y."/>
            <person name="Phelan M."/>
            <person name="Farmer A."/>
        </authorList>
    </citation>
    <scope>NUCLEOTIDE SEQUENCE [LARGE SCALE MRNA]</scope>
</reference>
<reference key="4">
    <citation type="submission" date="2004-05" db="EMBL/GenBank/DDBJ databases">
        <title>Cloning of human full open reading frames in Gateway(TM) system entry vector (pDONR201).</title>
        <authorList>
            <person name="Ebert L."/>
            <person name="Schick M."/>
            <person name="Neubert P."/>
            <person name="Schatten R."/>
            <person name="Henze S."/>
            <person name="Korn B."/>
        </authorList>
    </citation>
    <scope>NUCLEOTIDE SEQUENCE [LARGE SCALE MRNA]</scope>
</reference>
<reference key="5">
    <citation type="journal article" date="2004" name="Nat. Genet.">
        <title>Complete sequencing and characterization of 21,243 full-length human cDNAs.</title>
        <authorList>
            <person name="Ota T."/>
            <person name="Suzuki Y."/>
            <person name="Nishikawa T."/>
            <person name="Otsuki T."/>
            <person name="Sugiyama T."/>
            <person name="Irie R."/>
            <person name="Wakamatsu A."/>
            <person name="Hayashi K."/>
            <person name="Sato H."/>
            <person name="Nagai K."/>
            <person name="Kimura K."/>
            <person name="Makita H."/>
            <person name="Sekine M."/>
            <person name="Obayashi M."/>
            <person name="Nishi T."/>
            <person name="Shibahara T."/>
            <person name="Tanaka T."/>
            <person name="Ishii S."/>
            <person name="Yamamoto J."/>
            <person name="Saito K."/>
            <person name="Kawai Y."/>
            <person name="Isono Y."/>
            <person name="Nakamura Y."/>
            <person name="Nagahari K."/>
            <person name="Murakami K."/>
            <person name="Yasuda T."/>
            <person name="Iwayanagi T."/>
            <person name="Wagatsuma M."/>
            <person name="Shiratori A."/>
            <person name="Sudo H."/>
            <person name="Hosoiri T."/>
            <person name="Kaku Y."/>
            <person name="Kodaira H."/>
            <person name="Kondo H."/>
            <person name="Sugawara M."/>
            <person name="Takahashi M."/>
            <person name="Kanda K."/>
            <person name="Yokoi T."/>
            <person name="Furuya T."/>
            <person name="Kikkawa E."/>
            <person name="Omura Y."/>
            <person name="Abe K."/>
            <person name="Kamihara K."/>
            <person name="Katsuta N."/>
            <person name="Sato K."/>
            <person name="Tanikawa M."/>
            <person name="Yamazaki M."/>
            <person name="Ninomiya K."/>
            <person name="Ishibashi T."/>
            <person name="Yamashita H."/>
            <person name="Murakawa K."/>
            <person name="Fujimori K."/>
            <person name="Tanai H."/>
            <person name="Kimata M."/>
            <person name="Watanabe M."/>
            <person name="Hiraoka S."/>
            <person name="Chiba Y."/>
            <person name="Ishida S."/>
            <person name="Ono Y."/>
            <person name="Takiguchi S."/>
            <person name="Watanabe S."/>
            <person name="Yosida M."/>
            <person name="Hotuta T."/>
            <person name="Kusano J."/>
            <person name="Kanehori K."/>
            <person name="Takahashi-Fujii A."/>
            <person name="Hara H."/>
            <person name="Tanase T.-O."/>
            <person name="Nomura Y."/>
            <person name="Togiya S."/>
            <person name="Komai F."/>
            <person name="Hara R."/>
            <person name="Takeuchi K."/>
            <person name="Arita M."/>
            <person name="Imose N."/>
            <person name="Musashino K."/>
            <person name="Yuuki H."/>
            <person name="Oshima A."/>
            <person name="Sasaki N."/>
            <person name="Aotsuka S."/>
            <person name="Yoshikawa Y."/>
            <person name="Matsunawa H."/>
            <person name="Ichihara T."/>
            <person name="Shiohata N."/>
            <person name="Sano S."/>
            <person name="Moriya S."/>
            <person name="Momiyama H."/>
            <person name="Satoh N."/>
            <person name="Takami S."/>
            <person name="Terashima Y."/>
            <person name="Suzuki O."/>
            <person name="Nakagawa S."/>
            <person name="Senoh A."/>
            <person name="Mizoguchi H."/>
            <person name="Goto Y."/>
            <person name="Shimizu F."/>
            <person name="Wakebe H."/>
            <person name="Hishigaki H."/>
            <person name="Watanabe T."/>
            <person name="Sugiyama A."/>
            <person name="Takemoto M."/>
            <person name="Kawakami B."/>
            <person name="Yamazaki M."/>
            <person name="Watanabe K."/>
            <person name="Kumagai A."/>
            <person name="Itakura S."/>
            <person name="Fukuzumi Y."/>
            <person name="Fujimori Y."/>
            <person name="Komiyama M."/>
            <person name="Tashiro H."/>
            <person name="Tanigami A."/>
            <person name="Fujiwara T."/>
            <person name="Ono T."/>
            <person name="Yamada K."/>
            <person name="Fujii Y."/>
            <person name="Ozaki K."/>
            <person name="Hirao M."/>
            <person name="Ohmori Y."/>
            <person name="Kawabata A."/>
            <person name="Hikiji T."/>
            <person name="Kobatake N."/>
            <person name="Inagaki H."/>
            <person name="Ikema Y."/>
            <person name="Okamoto S."/>
            <person name="Okitani R."/>
            <person name="Kawakami T."/>
            <person name="Noguchi S."/>
            <person name="Itoh T."/>
            <person name="Shigeta K."/>
            <person name="Senba T."/>
            <person name="Matsumura K."/>
            <person name="Nakajima Y."/>
            <person name="Mizuno T."/>
            <person name="Morinaga M."/>
            <person name="Sasaki M."/>
            <person name="Togashi T."/>
            <person name="Oyama M."/>
            <person name="Hata H."/>
            <person name="Watanabe M."/>
            <person name="Komatsu T."/>
            <person name="Mizushima-Sugano J."/>
            <person name="Satoh T."/>
            <person name="Shirai Y."/>
            <person name="Takahashi Y."/>
            <person name="Nakagawa K."/>
            <person name="Okumura K."/>
            <person name="Nagase T."/>
            <person name="Nomura N."/>
            <person name="Kikuchi H."/>
            <person name="Masuho Y."/>
            <person name="Yamashita R."/>
            <person name="Nakai K."/>
            <person name="Yada T."/>
            <person name="Nakamura Y."/>
            <person name="Ohara O."/>
            <person name="Isogai T."/>
            <person name="Sugano S."/>
        </authorList>
    </citation>
    <scope>NUCLEOTIDE SEQUENCE [LARGE SCALE MRNA]</scope>
</reference>
<reference key="6">
    <citation type="submission" date="2005-07" db="EMBL/GenBank/DDBJ databases">
        <authorList>
            <person name="Mural R.J."/>
            <person name="Istrail S."/>
            <person name="Sutton G.G."/>
            <person name="Florea L."/>
            <person name="Halpern A.L."/>
            <person name="Mobarry C.M."/>
            <person name="Lippert R."/>
            <person name="Walenz B."/>
            <person name="Shatkay H."/>
            <person name="Dew I."/>
            <person name="Miller J.R."/>
            <person name="Flanigan M.J."/>
            <person name="Edwards N.J."/>
            <person name="Bolanos R."/>
            <person name="Fasulo D."/>
            <person name="Halldorsson B.V."/>
            <person name="Hannenhalli S."/>
            <person name="Turner R."/>
            <person name="Yooseph S."/>
            <person name="Lu F."/>
            <person name="Nusskern D.R."/>
            <person name="Shue B.C."/>
            <person name="Zheng X.H."/>
            <person name="Zhong F."/>
            <person name="Delcher A.L."/>
            <person name="Huson D.H."/>
            <person name="Kravitz S.A."/>
            <person name="Mouchard L."/>
            <person name="Reinert K."/>
            <person name="Remington K.A."/>
            <person name="Clark A.G."/>
            <person name="Waterman M.S."/>
            <person name="Eichler E.E."/>
            <person name="Adams M.D."/>
            <person name="Hunkapiller M.W."/>
            <person name="Myers E.W."/>
            <person name="Venter J.C."/>
        </authorList>
    </citation>
    <scope>NUCLEOTIDE SEQUENCE [LARGE SCALE GENOMIC DNA]</scope>
</reference>
<reference key="7">
    <citation type="journal article" date="2004" name="Genome Res.">
        <title>The status, quality, and expansion of the NIH full-length cDNA project: the Mammalian Gene Collection (MGC).</title>
        <authorList>
            <consortium name="The MGC Project Team"/>
        </authorList>
    </citation>
    <scope>NUCLEOTIDE SEQUENCE [LARGE SCALE MRNA]</scope>
    <source>
        <tissue>Kidney</tissue>
    </source>
</reference>
<reference key="8">
    <citation type="submission" date="2008-12" db="UniProtKB">
        <authorList>
            <person name="Bienvenut W.V."/>
            <person name="Matallanas D."/>
            <person name="Cooper W.N."/>
            <person name="Lilla S."/>
            <person name="von Kriegsheim A."/>
            <person name="Lempens A."/>
            <person name="Kolch W."/>
        </authorList>
    </citation>
    <scope>PROTEIN SEQUENCE OF 2-12 AND 74-88</scope>
    <scope>CLEAVAGE OF INITIATOR METHIONINE</scope>
    <scope>ACETYLATION AT SER-2</scope>
    <scope>IDENTIFICATION BY MASS SPECTROMETRY</scope>
    <source>
        <tissue>Mammary carcinoma</tissue>
        <tissue>Ovarian carcinoma</tissue>
    </source>
</reference>
<reference key="9">
    <citation type="submission" date="2008-12" db="UniProtKB">
        <authorList>
            <person name="Lubec G."/>
            <person name="Chen W.-Q."/>
            <person name="Sun Y."/>
        </authorList>
    </citation>
    <scope>PROTEIN SEQUENCE OF 18-34; 74-84 AND 91-96</scope>
    <scope>IDENTIFICATION BY MASS SPECTROMETRY</scope>
    <source>
        <tissue>Fetal brain cortex</tissue>
    </source>
</reference>
<reference key="10">
    <citation type="journal article" date="2006" name="FEBS J.">
        <title>Human enhancer of rudimentary is a molecular partner of PDIP46/SKAR, a protein interacting with DNA polymerase delta and S6K1 and regulating cell growth.</title>
        <authorList>
            <person name="Smyk A."/>
            <person name="Szuminska M."/>
            <person name="Uniewicz K.A."/>
            <person name="Graves L.M."/>
            <person name="Kozlowski P."/>
        </authorList>
    </citation>
    <scope>INTERACTION WITH POLDIP3</scope>
</reference>
<reference key="11">
    <citation type="journal article" date="2009" name="Anal. Chem.">
        <title>Lys-N and trypsin cover complementary parts of the phosphoproteome in a refined SCX-based approach.</title>
        <authorList>
            <person name="Gauci S."/>
            <person name="Helbig A.O."/>
            <person name="Slijper M."/>
            <person name="Krijgsveld J."/>
            <person name="Heck A.J."/>
            <person name="Mohammed S."/>
        </authorList>
    </citation>
    <scope>ACETYLATION [LARGE SCALE ANALYSIS] AT SER-2</scope>
    <scope>CLEAVAGE OF INITIATOR METHIONINE [LARGE SCALE ANALYSIS]</scope>
    <scope>IDENTIFICATION BY MASS SPECTROMETRY [LARGE SCALE ANALYSIS]</scope>
</reference>
<reference key="12">
    <citation type="journal article" date="2011" name="BMC Syst. Biol.">
        <title>Initial characterization of the human central proteome.</title>
        <authorList>
            <person name="Burkard T.R."/>
            <person name="Planyavsky M."/>
            <person name="Kaupe I."/>
            <person name="Breitwieser F.P."/>
            <person name="Buerckstuemmer T."/>
            <person name="Bennett K.L."/>
            <person name="Superti-Furga G."/>
            <person name="Colinge J."/>
        </authorList>
    </citation>
    <scope>IDENTIFICATION BY MASS SPECTROMETRY [LARGE SCALE ANALYSIS]</scope>
</reference>
<reference key="13">
    <citation type="journal article" date="2012" name="Mol. Cell. Proteomics">
        <title>Comparative large-scale characterisation of plant vs. mammal proteins reveals similar and idiosyncratic N-alpha acetylation features.</title>
        <authorList>
            <person name="Bienvenut W.V."/>
            <person name="Sumpton D."/>
            <person name="Martinez A."/>
            <person name="Lilla S."/>
            <person name="Espagne C."/>
            <person name="Meinnel T."/>
            <person name="Giglione C."/>
        </authorList>
    </citation>
    <scope>ACETYLATION [LARGE SCALE ANALYSIS] AT SER-2</scope>
    <scope>CLEAVAGE OF INITIATOR METHIONINE [LARGE SCALE ANALYSIS]</scope>
    <scope>IDENTIFICATION BY MASS SPECTROMETRY [LARGE SCALE ANALYSIS]</scope>
</reference>
<reference key="14">
    <citation type="journal article" date="2012" name="PLoS ONE">
        <title>Identification and Functional Analysis of the erh1(+) Gene Encoding Enhancer of Rudimentary Homolog from the Fission Yeast Schizosaccharomyces pombe.</title>
        <authorList>
            <person name="Krzyzanowski M.K."/>
            <person name="Kozlowska E."/>
            <person name="Kozlowski P."/>
        </authorList>
    </citation>
    <scope>SUBCELLULAR LOCATION</scope>
</reference>
<reference key="15">
    <citation type="journal article" date="2013" name="J. Proteome Res.">
        <title>Toward a comprehensive characterization of a human cancer cell phosphoproteome.</title>
        <authorList>
            <person name="Zhou H."/>
            <person name="Di Palma S."/>
            <person name="Preisinger C."/>
            <person name="Peng M."/>
            <person name="Polat A.N."/>
            <person name="Heck A.J."/>
            <person name="Mohammed S."/>
        </authorList>
    </citation>
    <scope>PHOSPHORYLATION [LARGE SCALE ANALYSIS] AT THR-11</scope>
    <scope>IDENTIFICATION BY MASS SPECTROMETRY [LARGE SCALE ANALYSIS]</scope>
    <source>
        <tissue>Erythroleukemia</tissue>
    </source>
</reference>
<reference key="16">
    <citation type="journal article" date="2014" name="Cell Rep.">
        <title>5-Hydroxymethylcytosine plays a critical role in glioblastomagenesis by recruiting the CHTOP-methylosome complex.</title>
        <authorList>
            <person name="Takai H."/>
            <person name="Masuda K."/>
            <person name="Sato T."/>
            <person name="Sakaguchi Y."/>
            <person name="Suzuki T."/>
            <person name="Suzuki T."/>
            <person name="Koyama-Nasu R."/>
            <person name="Nasu-Nishimura Y."/>
            <person name="Katou Y."/>
            <person name="Ogawa H."/>
            <person name="Morishita Y."/>
            <person name="Kozuka-Hata H."/>
            <person name="Oyama M."/>
            <person name="Todo T."/>
            <person name="Ino Y."/>
            <person name="Mukasa A."/>
            <person name="Saito N."/>
            <person name="Toyoshima C."/>
            <person name="Shirahige K."/>
            <person name="Akiyama T."/>
        </authorList>
    </citation>
    <scope>INTERACTION WITH CHTOP</scope>
    <scope>IDENTIFICATION IN THE METHYLOSOME COMPLEX WITH PRMT1; PRMT5 AND WDR77</scope>
</reference>
<reference key="17">
    <citation type="journal article" date="2015" name="Mol. Cell. Proteomics">
        <title>System-wide analysis of SUMOylation dynamics in response to replication stress reveals novel small ubiquitin-like modified target proteins and acceptor lysines relevant for genome stability.</title>
        <authorList>
            <person name="Xiao Z."/>
            <person name="Chang J.G."/>
            <person name="Hendriks I.A."/>
            <person name="Sigurdsson J.O."/>
            <person name="Olsen J.V."/>
            <person name="Vertegaal A.C."/>
        </authorList>
    </citation>
    <scope>SUMOYLATION [LARGE SCALE ANALYSIS] AT LYS-12</scope>
    <scope>IDENTIFICATION BY MASS SPECTROMETRY [LARGE SCALE ANALYSIS]</scope>
</reference>
<reference key="18">
    <citation type="journal article" date="2015" name="Proteomics">
        <title>N-terminome analysis of the human mitochondrial proteome.</title>
        <authorList>
            <person name="Vaca Jacome A.S."/>
            <person name="Rabilloud T."/>
            <person name="Schaeffer-Reiss C."/>
            <person name="Rompais M."/>
            <person name="Ayoub D."/>
            <person name="Lane L."/>
            <person name="Bairoch A."/>
            <person name="Van Dorsselaer A."/>
            <person name="Carapito C."/>
        </authorList>
    </citation>
    <scope>ACETYLATION [LARGE SCALE ANALYSIS] AT SER-2</scope>
    <scope>CLEAVAGE OF INITIATOR METHIONINE [LARGE SCALE ANALYSIS]</scope>
    <scope>IDENTIFICATION BY MASS SPECTROMETRY [LARGE SCALE ANALYSIS]</scope>
</reference>
<reference key="19">
    <citation type="journal article" date="2017" name="Nat. Struct. Mol. Biol.">
        <title>Site-specific mapping of the human SUMO proteome reveals co-modification with phosphorylation.</title>
        <authorList>
            <person name="Hendriks I.A."/>
            <person name="Lyon D."/>
            <person name="Young C."/>
            <person name="Jensen L.J."/>
            <person name="Vertegaal A.C."/>
            <person name="Nielsen M.L."/>
        </authorList>
    </citation>
    <scope>SUMOYLATION [LARGE SCALE ANALYSIS] AT LYS-12</scope>
    <scope>IDENTIFICATION BY MASS SPECTROMETRY [LARGE SCALE ANALYSIS]</scope>
</reference>
<reference key="20">
    <citation type="journal article" date="2005" name="Biochemistry">
        <title>Structure of the conserved transcriptional repressor enhancer of rudimentary homolog.</title>
        <authorList>
            <person name="Wan C."/>
            <person name="Tempel W."/>
            <person name="Liu Z.J."/>
            <person name="Wang B.C."/>
            <person name="Rose R.B."/>
        </authorList>
    </citation>
    <scope>X-RAY CRYSTALLOGRAPHY (2.0 ANGSTROMS)</scope>
</reference>
<feature type="initiator methionine" description="Removed" evidence="6 8 9 12">
    <location>
        <position position="1"/>
    </location>
</feature>
<feature type="chain" id="PRO_0000219351" description="Enhancer of rudimentary homolog">
    <location>
        <begin position="2"/>
        <end position="104"/>
    </location>
</feature>
<feature type="modified residue" description="N-acetylserine" evidence="6 8 9 12">
    <location>
        <position position="2"/>
    </location>
</feature>
<feature type="modified residue" description="Phosphothreonine" evidence="10">
    <location>
        <position position="11"/>
    </location>
</feature>
<feature type="cross-link" description="Glycyl lysine isopeptide (Lys-Gly) (interchain with G-Cter in SUMO2)" evidence="11 13">
    <location>
        <position position="12"/>
    </location>
</feature>
<feature type="strand" evidence="14">
    <location>
        <begin position="4"/>
        <end position="9"/>
    </location>
</feature>
<feature type="strand" evidence="15">
    <location>
        <begin position="11"/>
        <end position="13"/>
    </location>
</feature>
<feature type="helix" evidence="14">
    <location>
        <begin position="14"/>
        <end position="16"/>
    </location>
</feature>
<feature type="strand" evidence="14">
    <location>
        <begin position="18"/>
        <end position="24"/>
    </location>
</feature>
<feature type="helix" evidence="14">
    <location>
        <begin position="25"/>
        <end position="43"/>
    </location>
</feature>
<feature type="strand" evidence="15">
    <location>
        <begin position="48"/>
        <end position="53"/>
    </location>
</feature>
<feature type="helix" evidence="14">
    <location>
        <begin position="54"/>
        <end position="63"/>
    </location>
</feature>
<feature type="strand" evidence="14">
    <location>
        <begin position="64"/>
        <end position="73"/>
    </location>
</feature>
<feature type="turn" evidence="14">
    <location>
        <begin position="74"/>
        <end position="77"/>
    </location>
</feature>
<feature type="strand" evidence="14">
    <location>
        <begin position="78"/>
        <end position="82"/>
    </location>
</feature>
<feature type="helix" evidence="14">
    <location>
        <begin position="84"/>
        <end position="100"/>
    </location>
</feature>
<accession>P84090</accession>
<accession>B2R5H2</accession>
<accession>P70659</accession>
<accession>Q14259</accession>
<gene>
    <name type="primary">ERH</name>
</gene>
<dbReference type="EMBL" id="D85758">
    <property type="protein sequence ID" value="BAA12865.1"/>
    <property type="molecule type" value="mRNA"/>
</dbReference>
<dbReference type="EMBL" id="U66871">
    <property type="protein sequence ID" value="AAC51172.1"/>
    <property type="molecule type" value="mRNA"/>
</dbReference>
<dbReference type="EMBL" id="BT006877">
    <property type="protein sequence ID" value="AAP35523.1"/>
    <property type="molecule type" value="mRNA"/>
</dbReference>
<dbReference type="EMBL" id="AK312186">
    <property type="protein sequence ID" value="BAG35119.1"/>
    <property type="molecule type" value="mRNA"/>
</dbReference>
<dbReference type="EMBL" id="CH471061">
    <property type="protein sequence ID" value="EAW80989.1"/>
    <property type="molecule type" value="Genomic_DNA"/>
</dbReference>
<dbReference type="EMBL" id="BC014301">
    <property type="protein sequence ID" value="AAH14301.1"/>
    <property type="molecule type" value="mRNA"/>
</dbReference>
<dbReference type="EMBL" id="BC071709">
    <property type="protein sequence ID" value="AAH71709.1"/>
    <property type="molecule type" value="mRNA"/>
</dbReference>
<dbReference type="EMBL" id="CR450298">
    <property type="protein sequence ID" value="CAG29294.1"/>
    <property type="molecule type" value="mRNA"/>
</dbReference>
<dbReference type="EMBL" id="CR542178">
    <property type="protein sequence ID" value="CAG46975.1"/>
    <property type="molecule type" value="mRNA"/>
</dbReference>
<dbReference type="CCDS" id="CCDS9794.1"/>
<dbReference type="RefSeq" id="NP_004441.1">
    <property type="nucleotide sequence ID" value="NM_004450.3"/>
</dbReference>
<dbReference type="PDB" id="1W9G">
    <property type="method" value="X-ray"/>
    <property type="resolution" value="2.00 A"/>
    <property type="chains" value="A/B=1-104"/>
</dbReference>
<dbReference type="PDB" id="2NML">
    <property type="method" value="X-ray"/>
    <property type="resolution" value="1.55 A"/>
    <property type="chains" value="A=1-104"/>
</dbReference>
<dbReference type="PDB" id="7CNC">
    <property type="method" value="X-ray"/>
    <property type="resolution" value="1.60 A"/>
    <property type="chains" value="A=1-104"/>
</dbReference>
<dbReference type="PDB" id="7X39">
    <property type="method" value="X-ray"/>
    <property type="resolution" value="2.85 A"/>
    <property type="chains" value="A/B/C/D=1-104"/>
</dbReference>
<dbReference type="PDBsum" id="1W9G"/>
<dbReference type="PDBsum" id="2NML"/>
<dbReference type="PDBsum" id="7CNC"/>
<dbReference type="PDBsum" id="7X39"/>
<dbReference type="SMR" id="P84090"/>
<dbReference type="BioGRID" id="108390">
    <property type="interactions" value="249"/>
</dbReference>
<dbReference type="ComplexPortal" id="CPX-2488">
    <property type="entry name" value="TREX transcription-export complex, DX39B variant"/>
</dbReference>
<dbReference type="ComplexPortal" id="CPX-7261">
    <property type="entry name" value="TREX transcription-export complex, DX39A variant"/>
</dbReference>
<dbReference type="CORUM" id="P84090"/>
<dbReference type="DIP" id="DIP-42473N"/>
<dbReference type="FunCoup" id="P84090">
    <property type="interactions" value="2489"/>
</dbReference>
<dbReference type="IntAct" id="P84090">
    <property type="interactions" value="141"/>
</dbReference>
<dbReference type="MINT" id="P84090"/>
<dbReference type="STRING" id="9606.ENSP00000451080"/>
<dbReference type="GlyGen" id="P84090">
    <property type="glycosylation" value="1 site, 1 O-linked glycan (1 site)"/>
</dbReference>
<dbReference type="iPTMnet" id="P84090"/>
<dbReference type="PhosphoSitePlus" id="P84090"/>
<dbReference type="SwissPalm" id="P84090"/>
<dbReference type="BioMuta" id="ERH"/>
<dbReference type="DMDM" id="51317296"/>
<dbReference type="jPOST" id="P84090"/>
<dbReference type="MassIVE" id="P84090"/>
<dbReference type="PaxDb" id="9606-ENSP00000451080"/>
<dbReference type="PeptideAtlas" id="P84090"/>
<dbReference type="ProteomicsDB" id="57749"/>
<dbReference type="Pumba" id="P84090"/>
<dbReference type="TopDownProteomics" id="P84090"/>
<dbReference type="Antibodypedia" id="117">
    <property type="antibodies" value="253 antibodies from 27 providers"/>
</dbReference>
<dbReference type="DNASU" id="2079"/>
<dbReference type="Ensembl" id="ENST00000557016.6">
    <property type="protein sequence ID" value="ENSP00000451080.1"/>
    <property type="gene ID" value="ENSG00000100632.11"/>
</dbReference>
<dbReference type="GeneID" id="2079"/>
<dbReference type="KEGG" id="hsa:2079"/>
<dbReference type="MANE-Select" id="ENST00000557016.6">
    <property type="protein sequence ID" value="ENSP00000451080.1"/>
    <property type="RefSeq nucleotide sequence ID" value="NM_004450.3"/>
    <property type="RefSeq protein sequence ID" value="NP_004441.1"/>
</dbReference>
<dbReference type="UCSC" id="uc001xlc.3">
    <property type="organism name" value="human"/>
</dbReference>
<dbReference type="AGR" id="HGNC:3447"/>
<dbReference type="CTD" id="2079"/>
<dbReference type="DisGeNET" id="2079"/>
<dbReference type="GeneCards" id="ERH"/>
<dbReference type="HGNC" id="HGNC:3447">
    <property type="gene designation" value="ERH"/>
</dbReference>
<dbReference type="HPA" id="ENSG00000100632">
    <property type="expression patterns" value="Low tissue specificity"/>
</dbReference>
<dbReference type="MIM" id="601191">
    <property type="type" value="gene"/>
</dbReference>
<dbReference type="neXtProt" id="NX_P84090"/>
<dbReference type="OpenTargets" id="ENSG00000100632"/>
<dbReference type="PharmGKB" id="PA27859"/>
<dbReference type="VEuPathDB" id="HostDB:ENSG00000100632"/>
<dbReference type="eggNOG" id="KOG1766">
    <property type="taxonomic scope" value="Eukaryota"/>
</dbReference>
<dbReference type="GeneTree" id="ENSGT00390000003316"/>
<dbReference type="HOGENOM" id="CLU_125703_1_0_1"/>
<dbReference type="InParanoid" id="P84090"/>
<dbReference type="OMA" id="ESRTWSD"/>
<dbReference type="OrthoDB" id="7887808at2759"/>
<dbReference type="PAN-GO" id="P84090">
    <property type="GO annotations" value="0 GO annotations based on evolutionary models"/>
</dbReference>
<dbReference type="PhylomeDB" id="P84090"/>
<dbReference type="TreeFam" id="TF314568"/>
<dbReference type="PathwayCommons" id="P84090"/>
<dbReference type="SignaLink" id="P84090"/>
<dbReference type="BioGRID-ORCS" id="2079">
    <property type="hits" value="819 hits in 1126 CRISPR screens"/>
</dbReference>
<dbReference type="CD-CODE" id="804901D1">
    <property type="entry name" value="Nuclear speckle"/>
</dbReference>
<dbReference type="CD-CODE" id="91857CE7">
    <property type="entry name" value="Nucleolus"/>
</dbReference>
<dbReference type="ChiTaRS" id="ERH">
    <property type="organism name" value="human"/>
</dbReference>
<dbReference type="EvolutionaryTrace" id="P84090"/>
<dbReference type="GeneWiki" id="ERH_(gene)"/>
<dbReference type="GenomeRNAi" id="2079"/>
<dbReference type="Pharos" id="P84090">
    <property type="development level" value="Tbio"/>
</dbReference>
<dbReference type="PRO" id="PR:P84090"/>
<dbReference type="Proteomes" id="UP000005640">
    <property type="component" value="Chromosome 14"/>
</dbReference>
<dbReference type="RNAct" id="P84090">
    <property type="molecule type" value="protein"/>
</dbReference>
<dbReference type="Bgee" id="ENSG00000100632">
    <property type="expression patterns" value="Expressed in seminal vesicle and 219 other cell types or tissues"/>
</dbReference>
<dbReference type="ExpressionAtlas" id="P84090">
    <property type="expression patterns" value="baseline and differential"/>
</dbReference>
<dbReference type="GO" id="GO:0034709">
    <property type="term" value="C:methylosome"/>
    <property type="evidence" value="ECO:0000314"/>
    <property type="project" value="UniProtKB"/>
</dbReference>
<dbReference type="GO" id="GO:0030496">
    <property type="term" value="C:midbody"/>
    <property type="evidence" value="ECO:0000314"/>
    <property type="project" value="UniProtKB"/>
</dbReference>
<dbReference type="GO" id="GO:0005634">
    <property type="term" value="C:nucleus"/>
    <property type="evidence" value="ECO:0000314"/>
    <property type="project" value="UniProtKB"/>
</dbReference>
<dbReference type="GO" id="GO:0008327">
    <property type="term" value="F:methyl-CpG binding"/>
    <property type="evidence" value="ECO:0000314"/>
    <property type="project" value="UniProtKB"/>
</dbReference>
<dbReference type="GO" id="GO:0003723">
    <property type="term" value="F:RNA binding"/>
    <property type="evidence" value="ECO:0007005"/>
    <property type="project" value="UniProtKB"/>
</dbReference>
<dbReference type="GO" id="GO:0006139">
    <property type="term" value="P:nucleobase-containing compound metabolic process"/>
    <property type="evidence" value="ECO:0000304"/>
    <property type="project" value="ProtInc"/>
</dbReference>
<dbReference type="GO" id="GO:0006213">
    <property type="term" value="P:pyrimidine nucleoside metabolic process"/>
    <property type="evidence" value="ECO:0000304"/>
    <property type="project" value="ProtInc"/>
</dbReference>
<dbReference type="FunFam" id="3.30.2260.10:FF:000001">
    <property type="entry name" value="Enhancer of rudimentary homolog"/>
    <property type="match status" value="1"/>
</dbReference>
<dbReference type="Gene3D" id="3.30.2260.10">
    <property type="entry name" value="Enhancer of rudimentary"/>
    <property type="match status" value="1"/>
</dbReference>
<dbReference type="InterPro" id="IPR035912">
    <property type="entry name" value="EHR_sf"/>
</dbReference>
<dbReference type="InterPro" id="IPR000781">
    <property type="entry name" value="ERH"/>
</dbReference>
<dbReference type="PANTHER" id="PTHR12373">
    <property type="entry name" value="ENHANCER OF RUDIMENTARY ERH"/>
    <property type="match status" value="1"/>
</dbReference>
<dbReference type="PANTHER" id="PTHR12373:SF0">
    <property type="entry name" value="ENHANCER OF RUDIMENTARY HOMOLOG"/>
    <property type="match status" value="1"/>
</dbReference>
<dbReference type="Pfam" id="PF01133">
    <property type="entry name" value="ER"/>
    <property type="match status" value="1"/>
</dbReference>
<dbReference type="PIRSF" id="PIRSF016393">
    <property type="entry name" value="Enh_rudimentary"/>
    <property type="match status" value="1"/>
</dbReference>
<dbReference type="SUPFAM" id="SSF143875">
    <property type="entry name" value="ERH-like"/>
    <property type="match status" value="1"/>
</dbReference>
<dbReference type="PROSITE" id="PS01290">
    <property type="entry name" value="ER"/>
    <property type="match status" value="1"/>
</dbReference>
<sequence length="104" mass="12259">MSHTILLVQPTKRPEGRTYADYESVNECMEGVCKMYEEHLKRMNPNSPSITYDISQLFDFIDDLADLSCLVYRADTQTYQPYNKDWIKEKIYVLLRRQAQQAGK</sequence>
<organism>
    <name type="scientific">Homo sapiens</name>
    <name type="common">Human</name>
    <dbReference type="NCBI Taxonomy" id="9606"/>
    <lineage>
        <taxon>Eukaryota</taxon>
        <taxon>Metazoa</taxon>
        <taxon>Chordata</taxon>
        <taxon>Craniata</taxon>
        <taxon>Vertebrata</taxon>
        <taxon>Euteleostomi</taxon>
        <taxon>Mammalia</taxon>
        <taxon>Eutheria</taxon>
        <taxon>Euarchontoglires</taxon>
        <taxon>Primates</taxon>
        <taxon>Haplorrhini</taxon>
        <taxon>Catarrhini</taxon>
        <taxon>Hominidae</taxon>
        <taxon>Homo</taxon>
    </lineage>
</organism>
<evidence type="ECO:0000250" key="1">
    <source>
        <dbReference type="UniProtKB" id="P84089"/>
    </source>
</evidence>
<evidence type="ECO:0000269" key="2">
    <source>
    </source>
</evidence>
<evidence type="ECO:0000269" key="3">
    <source>
    </source>
</evidence>
<evidence type="ECO:0000269" key="4">
    <source>
    </source>
</evidence>
<evidence type="ECO:0000269" key="5">
    <source>
    </source>
</evidence>
<evidence type="ECO:0000269" key="6">
    <source ref="8"/>
</evidence>
<evidence type="ECO:0000305" key="7"/>
<evidence type="ECO:0007744" key="8">
    <source>
    </source>
</evidence>
<evidence type="ECO:0007744" key="9">
    <source>
    </source>
</evidence>
<evidence type="ECO:0007744" key="10">
    <source>
    </source>
</evidence>
<evidence type="ECO:0007744" key="11">
    <source>
    </source>
</evidence>
<evidence type="ECO:0007744" key="12">
    <source>
    </source>
</evidence>
<evidence type="ECO:0007744" key="13">
    <source>
    </source>
</evidence>
<evidence type="ECO:0007829" key="14">
    <source>
        <dbReference type="PDB" id="2NML"/>
    </source>
</evidence>
<evidence type="ECO:0007829" key="15">
    <source>
        <dbReference type="PDB" id="7X39"/>
    </source>
</evidence>
<name>ERH_HUMAN</name>
<proteinExistence type="evidence at protein level"/>
<protein>
    <recommendedName>
        <fullName>Enhancer of rudimentary homolog</fullName>
    </recommendedName>
</protein>